<keyword id="KW-0067">ATP-binding</keyword>
<keyword id="KW-0143">Chaperone</keyword>
<keyword id="KW-0963">Cytoplasm</keyword>
<keyword id="KW-0413">Isomerase</keyword>
<keyword id="KW-0547">Nucleotide-binding</keyword>
<keyword id="KW-1185">Reference proteome</keyword>
<dbReference type="EC" id="5.6.1.7" evidence="1"/>
<dbReference type="EMBL" id="CP000727">
    <property type="protein sequence ID" value="ABS37236.1"/>
    <property type="molecule type" value="Genomic_DNA"/>
</dbReference>
<dbReference type="EMBL" id="AM412317">
    <property type="protein sequence ID" value="CAL84856.1"/>
    <property type="molecule type" value="Genomic_DNA"/>
</dbReference>
<dbReference type="RefSeq" id="WP_003357641.1">
    <property type="nucleotide sequence ID" value="NC_009698.1"/>
</dbReference>
<dbReference type="RefSeq" id="YP_001255782.1">
    <property type="nucleotide sequence ID" value="NC_009495.1"/>
</dbReference>
<dbReference type="RefSeq" id="YP_001389022.1">
    <property type="nucleotide sequence ID" value="NC_009698.1"/>
</dbReference>
<dbReference type="SMR" id="A5I723"/>
<dbReference type="GeneID" id="5185850"/>
<dbReference type="KEGG" id="cbh:CLC_3240"/>
<dbReference type="KEGG" id="cbo:CBO3298"/>
<dbReference type="PATRIC" id="fig|413999.7.peg.3274"/>
<dbReference type="HOGENOM" id="CLU_016503_3_0_9"/>
<dbReference type="PRO" id="PR:A5I723"/>
<dbReference type="Proteomes" id="UP000001986">
    <property type="component" value="Chromosome"/>
</dbReference>
<dbReference type="GO" id="GO:1990220">
    <property type="term" value="C:GroEL-GroES complex"/>
    <property type="evidence" value="ECO:0000318"/>
    <property type="project" value="GO_Central"/>
</dbReference>
<dbReference type="GO" id="GO:0005524">
    <property type="term" value="F:ATP binding"/>
    <property type="evidence" value="ECO:0000318"/>
    <property type="project" value="GO_Central"/>
</dbReference>
<dbReference type="GO" id="GO:0140662">
    <property type="term" value="F:ATP-dependent protein folding chaperone"/>
    <property type="evidence" value="ECO:0007669"/>
    <property type="project" value="InterPro"/>
</dbReference>
<dbReference type="GO" id="GO:0016853">
    <property type="term" value="F:isomerase activity"/>
    <property type="evidence" value="ECO:0007669"/>
    <property type="project" value="UniProtKB-KW"/>
</dbReference>
<dbReference type="GO" id="GO:0051082">
    <property type="term" value="F:unfolded protein binding"/>
    <property type="evidence" value="ECO:0000318"/>
    <property type="project" value="GO_Central"/>
</dbReference>
<dbReference type="GO" id="GO:0051085">
    <property type="term" value="P:chaperone cofactor-dependent protein refolding"/>
    <property type="evidence" value="ECO:0000318"/>
    <property type="project" value="GO_Central"/>
</dbReference>
<dbReference type="GO" id="GO:0042026">
    <property type="term" value="P:protein refolding"/>
    <property type="evidence" value="ECO:0007669"/>
    <property type="project" value="UniProtKB-UniRule"/>
</dbReference>
<dbReference type="GO" id="GO:0009408">
    <property type="term" value="P:response to heat"/>
    <property type="evidence" value="ECO:0000318"/>
    <property type="project" value="GO_Central"/>
</dbReference>
<dbReference type="CDD" id="cd03344">
    <property type="entry name" value="GroEL"/>
    <property type="match status" value="1"/>
</dbReference>
<dbReference type="FunFam" id="3.50.7.10:FF:000001">
    <property type="entry name" value="60 kDa chaperonin"/>
    <property type="match status" value="1"/>
</dbReference>
<dbReference type="Gene3D" id="3.50.7.10">
    <property type="entry name" value="GroEL"/>
    <property type="match status" value="1"/>
</dbReference>
<dbReference type="Gene3D" id="1.10.560.10">
    <property type="entry name" value="GroEL-like equatorial domain"/>
    <property type="match status" value="1"/>
</dbReference>
<dbReference type="Gene3D" id="3.30.260.10">
    <property type="entry name" value="TCP-1-like chaperonin intermediate domain"/>
    <property type="match status" value="1"/>
</dbReference>
<dbReference type="HAMAP" id="MF_00600">
    <property type="entry name" value="CH60"/>
    <property type="match status" value="1"/>
</dbReference>
<dbReference type="InterPro" id="IPR018370">
    <property type="entry name" value="Chaperonin_Cpn60_CS"/>
</dbReference>
<dbReference type="InterPro" id="IPR001844">
    <property type="entry name" value="Cpn60/GroEL"/>
</dbReference>
<dbReference type="InterPro" id="IPR002423">
    <property type="entry name" value="Cpn60/GroEL/TCP-1"/>
</dbReference>
<dbReference type="InterPro" id="IPR027409">
    <property type="entry name" value="GroEL-like_apical_dom_sf"/>
</dbReference>
<dbReference type="InterPro" id="IPR027413">
    <property type="entry name" value="GROEL-like_equatorial_sf"/>
</dbReference>
<dbReference type="InterPro" id="IPR027410">
    <property type="entry name" value="TCP-1-like_intermed_sf"/>
</dbReference>
<dbReference type="NCBIfam" id="TIGR02348">
    <property type="entry name" value="GroEL"/>
    <property type="match status" value="1"/>
</dbReference>
<dbReference type="NCBIfam" id="NF000592">
    <property type="entry name" value="PRK00013.1"/>
    <property type="match status" value="1"/>
</dbReference>
<dbReference type="NCBIfam" id="NF009487">
    <property type="entry name" value="PRK12849.1"/>
    <property type="match status" value="1"/>
</dbReference>
<dbReference type="NCBIfam" id="NF009488">
    <property type="entry name" value="PRK12850.1"/>
    <property type="match status" value="1"/>
</dbReference>
<dbReference type="NCBIfam" id="NF009489">
    <property type="entry name" value="PRK12851.1"/>
    <property type="match status" value="1"/>
</dbReference>
<dbReference type="PANTHER" id="PTHR45633">
    <property type="entry name" value="60 KDA HEAT SHOCK PROTEIN, MITOCHONDRIAL"/>
    <property type="match status" value="1"/>
</dbReference>
<dbReference type="Pfam" id="PF00118">
    <property type="entry name" value="Cpn60_TCP1"/>
    <property type="match status" value="1"/>
</dbReference>
<dbReference type="PRINTS" id="PR00298">
    <property type="entry name" value="CHAPERONIN60"/>
</dbReference>
<dbReference type="SUPFAM" id="SSF52029">
    <property type="entry name" value="GroEL apical domain-like"/>
    <property type="match status" value="1"/>
</dbReference>
<dbReference type="SUPFAM" id="SSF48592">
    <property type="entry name" value="GroEL equatorial domain-like"/>
    <property type="match status" value="1"/>
</dbReference>
<dbReference type="SUPFAM" id="SSF54849">
    <property type="entry name" value="GroEL-intermediate domain like"/>
    <property type="match status" value="1"/>
</dbReference>
<dbReference type="PROSITE" id="PS00296">
    <property type="entry name" value="CHAPERONINS_CPN60"/>
    <property type="match status" value="1"/>
</dbReference>
<accession>A5I723</accession>
<accession>A7G8A7</accession>
<gene>
    <name evidence="1" type="primary">groEL</name>
    <name evidence="1" type="synonym">groL</name>
    <name type="ordered locus">CBO3298</name>
    <name type="ordered locus">CLC_3240</name>
</gene>
<reference key="1">
    <citation type="journal article" date="2007" name="Genome Res.">
        <title>Genome sequence of a proteolytic (Group I) Clostridium botulinum strain Hall A and comparative analysis of the clostridial genomes.</title>
        <authorList>
            <person name="Sebaihia M."/>
            <person name="Peck M.W."/>
            <person name="Minton N.P."/>
            <person name="Thomson N.R."/>
            <person name="Holden M.T.G."/>
            <person name="Mitchell W.J."/>
            <person name="Carter A.T."/>
            <person name="Bentley S.D."/>
            <person name="Mason D.R."/>
            <person name="Crossman L."/>
            <person name="Paul C.J."/>
            <person name="Ivens A."/>
            <person name="Wells-Bennik M.H.J."/>
            <person name="Davis I.J."/>
            <person name="Cerdeno-Tarraga A.M."/>
            <person name="Churcher C."/>
            <person name="Quail M.A."/>
            <person name="Chillingworth T."/>
            <person name="Feltwell T."/>
            <person name="Fraser A."/>
            <person name="Goodhead I."/>
            <person name="Hance Z."/>
            <person name="Jagels K."/>
            <person name="Larke N."/>
            <person name="Maddison M."/>
            <person name="Moule S."/>
            <person name="Mungall K."/>
            <person name="Norbertczak H."/>
            <person name="Rabbinowitsch E."/>
            <person name="Sanders M."/>
            <person name="Simmonds M."/>
            <person name="White B."/>
            <person name="Whithead S."/>
            <person name="Parkhill J."/>
        </authorList>
    </citation>
    <scope>NUCLEOTIDE SEQUENCE [LARGE SCALE GENOMIC DNA]</scope>
    <source>
        <strain>Hall / ATCC 3502 / NCTC 13319 / Type A</strain>
    </source>
</reference>
<reference key="2">
    <citation type="journal article" date="2007" name="PLoS ONE">
        <title>Analysis of the neurotoxin complex genes in Clostridium botulinum A1-A4 and B1 strains: BoNT/A3, /Ba4 and /B1 clusters are located within plasmids.</title>
        <authorList>
            <person name="Smith T.J."/>
            <person name="Hill K.K."/>
            <person name="Foley B.T."/>
            <person name="Detter J.C."/>
            <person name="Munk A.C."/>
            <person name="Bruce D.C."/>
            <person name="Doggett N.A."/>
            <person name="Smith L.A."/>
            <person name="Marks J.D."/>
            <person name="Xie G."/>
            <person name="Brettin T.S."/>
        </authorList>
    </citation>
    <scope>NUCLEOTIDE SEQUENCE [LARGE SCALE GENOMIC DNA]</scope>
    <source>
        <strain>Hall / ATCC 3502 / NCTC 13319 / Type A</strain>
    </source>
</reference>
<feature type="chain" id="PRO_1000025773" description="Chaperonin GroEL">
    <location>
        <begin position="1"/>
        <end position="541"/>
    </location>
</feature>
<feature type="binding site" evidence="1">
    <location>
        <begin position="29"/>
        <end position="32"/>
    </location>
    <ligand>
        <name>ATP</name>
        <dbReference type="ChEBI" id="CHEBI:30616"/>
    </ligand>
</feature>
<feature type="binding site" evidence="1">
    <location>
        <begin position="86"/>
        <end position="90"/>
    </location>
    <ligand>
        <name>ATP</name>
        <dbReference type="ChEBI" id="CHEBI:30616"/>
    </ligand>
</feature>
<feature type="binding site" evidence="1">
    <location>
        <position position="413"/>
    </location>
    <ligand>
        <name>ATP</name>
        <dbReference type="ChEBI" id="CHEBI:30616"/>
    </ligand>
</feature>
<feature type="binding site" evidence="1">
    <location>
        <begin position="477"/>
        <end position="479"/>
    </location>
    <ligand>
        <name>ATP</name>
        <dbReference type="ChEBI" id="CHEBI:30616"/>
    </ligand>
</feature>
<feature type="binding site" evidence="1">
    <location>
        <position position="493"/>
    </location>
    <ligand>
        <name>ATP</name>
        <dbReference type="ChEBI" id="CHEBI:30616"/>
    </ligand>
</feature>
<sequence>MAKSLLFGEQARRSMEAGVDKLADTVRVTLGPKGRNVVLDKKFGSPLITNDGVTIAREIELEDPYENMGAQLVKEVATKTNDVAGDGTTTATLLAQAIIREGLKNVTAGANPIQIRTGIRKAVEKAVEEIKVISKPVNGKEDIARVAAISAASEEVGKLIADAMERVGNDGVITVEESKSMGTDLEVVEGMQFDRGYVSAYMVTDTEKMEAVLDDVYILITDKKISNIQEILPILEQIVQQGKKLLIISEDIEGEALSTLVLNKLRGTFTCVGVKAPGFGDRRKEMLQDIAILTGGEVISEELGRDLKDVTIDMLGTADSVKVTKENTTIVNGKGDKVAIKERVSQIRVQIEDTTSEFDKEKLQERLAKLAGGVAVIRVGAATETELKEEKLRIEDALAATKAAVEEGIVPGGGTAYIDIIPKIADLTSDIIDVKLGIDIIRKALEEPVRQIANNAGAEGSVIIEKVKATEAGVGYDALNDKYVDMLKTGIVDPTKVTRSALQNAASIASTFLTTEAAVADIPEKENTPPMAPGMGMDGMY</sequence>
<organism>
    <name type="scientific">Clostridium botulinum (strain Hall / ATCC 3502 / NCTC 13319 / Type A)</name>
    <dbReference type="NCBI Taxonomy" id="441771"/>
    <lineage>
        <taxon>Bacteria</taxon>
        <taxon>Bacillati</taxon>
        <taxon>Bacillota</taxon>
        <taxon>Clostridia</taxon>
        <taxon>Eubacteriales</taxon>
        <taxon>Clostridiaceae</taxon>
        <taxon>Clostridium</taxon>
    </lineage>
</organism>
<comment type="function">
    <text evidence="1">Together with its co-chaperonin GroES, plays an essential role in assisting protein folding. The GroEL-GroES system forms a nano-cage that allows encapsulation of the non-native substrate proteins and provides a physical environment optimized to promote and accelerate protein folding.</text>
</comment>
<comment type="catalytic activity">
    <reaction evidence="1">
        <text>ATP + H2O + a folded polypeptide = ADP + phosphate + an unfolded polypeptide.</text>
        <dbReference type="EC" id="5.6.1.7"/>
    </reaction>
</comment>
<comment type="subunit">
    <text evidence="1">Forms a cylinder of 14 subunits composed of two heptameric rings stacked back-to-back. Interacts with the co-chaperonin GroES.</text>
</comment>
<comment type="subcellular location">
    <subcellularLocation>
        <location evidence="1">Cytoplasm</location>
    </subcellularLocation>
</comment>
<comment type="similarity">
    <text evidence="1">Belongs to the chaperonin (HSP60) family.</text>
</comment>
<proteinExistence type="inferred from homology"/>
<evidence type="ECO:0000255" key="1">
    <source>
        <dbReference type="HAMAP-Rule" id="MF_00600"/>
    </source>
</evidence>
<name>CH60_CLOBH</name>
<protein>
    <recommendedName>
        <fullName evidence="1">Chaperonin GroEL</fullName>
        <ecNumber evidence="1">5.6.1.7</ecNumber>
    </recommendedName>
    <alternativeName>
        <fullName evidence="1">60 kDa chaperonin</fullName>
    </alternativeName>
    <alternativeName>
        <fullName evidence="1">Chaperonin-60</fullName>
        <shortName evidence="1">Cpn60</shortName>
    </alternativeName>
</protein>